<comment type="function">
    <text evidence="1">Produces ATP from ADP in the presence of a proton gradient across the membrane. The gamma chain is believed to be important in regulating ATPase activity and the flow of protons through the CF(0) complex.</text>
</comment>
<comment type="subunit">
    <text evidence="1">F-type ATPases have 2 components, CF(1) - the catalytic core - and CF(0) - the membrane proton channel. CF(1) has five subunits: alpha(3), beta(3), gamma(1), delta(1), epsilon(1). CF(0) has three main subunits: a, b and c.</text>
</comment>
<comment type="subcellular location">
    <subcellularLocation>
        <location evidence="1">Cell inner membrane</location>
        <topology evidence="1">Peripheral membrane protein</topology>
    </subcellularLocation>
</comment>
<comment type="similarity">
    <text evidence="1">Belongs to the ATPase gamma chain family.</text>
</comment>
<accession>Q5PKX1</accession>
<reference key="1">
    <citation type="journal article" date="2004" name="Nat. Genet.">
        <title>Comparison of genome degradation in Paratyphi A and Typhi, human-restricted serovars of Salmonella enterica that cause typhoid.</title>
        <authorList>
            <person name="McClelland M."/>
            <person name="Sanderson K.E."/>
            <person name="Clifton S.W."/>
            <person name="Latreille P."/>
            <person name="Porwollik S."/>
            <person name="Sabo A."/>
            <person name="Meyer R."/>
            <person name="Bieri T."/>
            <person name="Ozersky P."/>
            <person name="McLellan M."/>
            <person name="Harkins C.R."/>
            <person name="Wang C."/>
            <person name="Nguyen C."/>
            <person name="Berghoff A."/>
            <person name="Elliott G."/>
            <person name="Kohlberg S."/>
            <person name="Strong C."/>
            <person name="Du F."/>
            <person name="Carter J."/>
            <person name="Kremizki C."/>
            <person name="Layman D."/>
            <person name="Leonard S."/>
            <person name="Sun H."/>
            <person name="Fulton L."/>
            <person name="Nash W."/>
            <person name="Miner T."/>
            <person name="Minx P."/>
            <person name="Delehaunty K."/>
            <person name="Fronick C."/>
            <person name="Magrini V."/>
            <person name="Nhan M."/>
            <person name="Warren W."/>
            <person name="Florea L."/>
            <person name="Spieth J."/>
            <person name="Wilson R.K."/>
        </authorList>
    </citation>
    <scope>NUCLEOTIDE SEQUENCE [LARGE SCALE GENOMIC DNA]</scope>
    <source>
        <strain>ATCC 9150 / SARB42</strain>
    </source>
</reference>
<protein>
    <recommendedName>
        <fullName evidence="1">ATP synthase gamma chain</fullName>
    </recommendedName>
    <alternativeName>
        <fullName evidence="1">ATP synthase F1 sector gamma subunit</fullName>
    </alternativeName>
    <alternativeName>
        <fullName evidence="1">F-ATPase gamma subunit</fullName>
    </alternativeName>
</protein>
<keyword id="KW-0066">ATP synthesis</keyword>
<keyword id="KW-0997">Cell inner membrane</keyword>
<keyword id="KW-1003">Cell membrane</keyword>
<keyword id="KW-0139">CF(1)</keyword>
<keyword id="KW-0375">Hydrogen ion transport</keyword>
<keyword id="KW-0406">Ion transport</keyword>
<keyword id="KW-0472">Membrane</keyword>
<keyword id="KW-0813">Transport</keyword>
<proteinExistence type="inferred from homology"/>
<gene>
    <name evidence="1" type="primary">atpG</name>
    <name type="ordered locus">SPA3705</name>
</gene>
<name>ATPG_SALPA</name>
<sequence length="287" mass="31528">MAGAKEIRSKIASVQNTQKITKAMEMVAASKMRKSQDRMAASRPYAETMRKVIGHLANGNLEYKHPYLEERDVKRVGYLVVSTDRGLCGGLNINLFKKLLADMKAWSDKGVQCELAMIGSKGVSFFNSVGGNVVAQVTGMGDNPSLSELIGPVKVMLQAYDEGRLDKLYIVSNKFINTMSQVPTITQLLPLPASEDDDLKRTAWDYLYEPDPKALLDTLLRRYVESQVYQGVVENLASEQAARMVAMKAATDNGGSLIKELQLVYNKARQASITQELTEIVSGAAAV</sequence>
<feature type="chain" id="PRO_0000073366" description="ATP synthase gamma chain">
    <location>
        <begin position="1"/>
        <end position="287"/>
    </location>
</feature>
<dbReference type="EMBL" id="CP000026">
    <property type="protein sequence ID" value="AAV79497.1"/>
    <property type="molecule type" value="Genomic_DNA"/>
</dbReference>
<dbReference type="RefSeq" id="WP_000896507.1">
    <property type="nucleotide sequence ID" value="NC_006511.1"/>
</dbReference>
<dbReference type="SMR" id="Q5PKX1"/>
<dbReference type="KEGG" id="spt:SPA3705"/>
<dbReference type="HOGENOM" id="CLU_050669_0_1_6"/>
<dbReference type="Proteomes" id="UP000008185">
    <property type="component" value="Chromosome"/>
</dbReference>
<dbReference type="GO" id="GO:0005886">
    <property type="term" value="C:plasma membrane"/>
    <property type="evidence" value="ECO:0007669"/>
    <property type="project" value="UniProtKB-SubCell"/>
</dbReference>
<dbReference type="GO" id="GO:0045259">
    <property type="term" value="C:proton-transporting ATP synthase complex"/>
    <property type="evidence" value="ECO:0007669"/>
    <property type="project" value="UniProtKB-KW"/>
</dbReference>
<dbReference type="GO" id="GO:0005524">
    <property type="term" value="F:ATP binding"/>
    <property type="evidence" value="ECO:0007669"/>
    <property type="project" value="UniProtKB-UniRule"/>
</dbReference>
<dbReference type="GO" id="GO:0046933">
    <property type="term" value="F:proton-transporting ATP synthase activity, rotational mechanism"/>
    <property type="evidence" value="ECO:0007669"/>
    <property type="project" value="UniProtKB-UniRule"/>
</dbReference>
<dbReference type="GO" id="GO:0042777">
    <property type="term" value="P:proton motive force-driven plasma membrane ATP synthesis"/>
    <property type="evidence" value="ECO:0007669"/>
    <property type="project" value="UniProtKB-UniRule"/>
</dbReference>
<dbReference type="CDD" id="cd12151">
    <property type="entry name" value="F1-ATPase_gamma"/>
    <property type="match status" value="1"/>
</dbReference>
<dbReference type="FunFam" id="1.10.287.80:FF:000005">
    <property type="entry name" value="ATP synthase gamma chain"/>
    <property type="match status" value="2"/>
</dbReference>
<dbReference type="FunFam" id="3.40.1380.10:FF:000001">
    <property type="entry name" value="ATP synthase gamma chain"/>
    <property type="match status" value="1"/>
</dbReference>
<dbReference type="Gene3D" id="3.40.1380.10">
    <property type="match status" value="1"/>
</dbReference>
<dbReference type="Gene3D" id="1.10.287.80">
    <property type="entry name" value="ATP synthase, gamma subunit, helix hairpin domain"/>
    <property type="match status" value="1"/>
</dbReference>
<dbReference type="HAMAP" id="MF_00815">
    <property type="entry name" value="ATP_synth_gamma_bact"/>
    <property type="match status" value="1"/>
</dbReference>
<dbReference type="InterPro" id="IPR035968">
    <property type="entry name" value="ATP_synth_F1_ATPase_gsu"/>
</dbReference>
<dbReference type="InterPro" id="IPR000131">
    <property type="entry name" value="ATP_synth_F1_gsu"/>
</dbReference>
<dbReference type="InterPro" id="IPR023632">
    <property type="entry name" value="ATP_synth_F1_gsu_CS"/>
</dbReference>
<dbReference type="NCBIfam" id="TIGR01146">
    <property type="entry name" value="ATPsyn_F1gamma"/>
    <property type="match status" value="1"/>
</dbReference>
<dbReference type="NCBIfam" id="NF004144">
    <property type="entry name" value="PRK05621.1-1"/>
    <property type="match status" value="1"/>
</dbReference>
<dbReference type="PANTHER" id="PTHR11693">
    <property type="entry name" value="ATP SYNTHASE GAMMA CHAIN"/>
    <property type="match status" value="1"/>
</dbReference>
<dbReference type="PANTHER" id="PTHR11693:SF22">
    <property type="entry name" value="ATP SYNTHASE SUBUNIT GAMMA, MITOCHONDRIAL"/>
    <property type="match status" value="1"/>
</dbReference>
<dbReference type="Pfam" id="PF00231">
    <property type="entry name" value="ATP-synt"/>
    <property type="match status" value="1"/>
</dbReference>
<dbReference type="PRINTS" id="PR00126">
    <property type="entry name" value="ATPASEGAMMA"/>
</dbReference>
<dbReference type="SUPFAM" id="SSF52943">
    <property type="entry name" value="ATP synthase (F1-ATPase), gamma subunit"/>
    <property type="match status" value="1"/>
</dbReference>
<dbReference type="PROSITE" id="PS00153">
    <property type="entry name" value="ATPASE_GAMMA"/>
    <property type="match status" value="1"/>
</dbReference>
<evidence type="ECO:0000255" key="1">
    <source>
        <dbReference type="HAMAP-Rule" id="MF_00815"/>
    </source>
</evidence>
<organism>
    <name type="scientific">Salmonella paratyphi A (strain ATCC 9150 / SARB42)</name>
    <dbReference type="NCBI Taxonomy" id="295319"/>
    <lineage>
        <taxon>Bacteria</taxon>
        <taxon>Pseudomonadati</taxon>
        <taxon>Pseudomonadota</taxon>
        <taxon>Gammaproteobacteria</taxon>
        <taxon>Enterobacterales</taxon>
        <taxon>Enterobacteriaceae</taxon>
        <taxon>Salmonella</taxon>
    </lineage>
</organism>